<organism>
    <name type="scientific">Brucella abortus (strain S19)</name>
    <dbReference type="NCBI Taxonomy" id="430066"/>
    <lineage>
        <taxon>Bacteria</taxon>
        <taxon>Pseudomonadati</taxon>
        <taxon>Pseudomonadota</taxon>
        <taxon>Alphaproteobacteria</taxon>
        <taxon>Hyphomicrobiales</taxon>
        <taxon>Brucellaceae</taxon>
        <taxon>Brucella/Ochrobactrum group</taxon>
        <taxon>Brucella</taxon>
    </lineage>
</organism>
<sequence>MMESGEALLKKLDGRLSGLRGRLTPDTGMDKITWFRAGGPAQVLFQPSDEEDLSAFLKAVPEEIPLLVVGIGSNLLVRDGGVPGFVVRLSAKGFGEVEQVCDTQLRAGAAAPDKRVAAAALEAGLAGFHFYHGIPGGIGGALRMNAGANGVETRERVVEVRALDRKGEVHVLSNADMGYAYRHSSASPDLIFTSVLFEGVPGERDDIRRAMDEVQHHRETVQPVREKTGGSTFKNSEGTSAWKEIDKAGCRGLRVGGAQMSEMHCNFMINTGNATGHDLETLGETVRARVFENSGIRLHWEIKRLGLFREGEQIEEFLGKIV</sequence>
<evidence type="ECO:0000255" key="1">
    <source>
        <dbReference type="HAMAP-Rule" id="MF_00037"/>
    </source>
</evidence>
<keyword id="KW-0131">Cell cycle</keyword>
<keyword id="KW-0132">Cell division</keyword>
<keyword id="KW-0133">Cell shape</keyword>
<keyword id="KW-0961">Cell wall biogenesis/degradation</keyword>
<keyword id="KW-0963">Cytoplasm</keyword>
<keyword id="KW-0274">FAD</keyword>
<keyword id="KW-0285">Flavoprotein</keyword>
<keyword id="KW-0521">NADP</keyword>
<keyword id="KW-0560">Oxidoreductase</keyword>
<keyword id="KW-0573">Peptidoglycan synthesis</keyword>
<name>MURB_BRUA1</name>
<accession>B2S6Q2</accession>
<reference key="1">
    <citation type="journal article" date="2008" name="PLoS ONE">
        <title>Genome sequence of Brucella abortus vaccine strain S19 compared to virulent strains yields candidate virulence genes.</title>
        <authorList>
            <person name="Crasta O.R."/>
            <person name="Folkerts O."/>
            <person name="Fei Z."/>
            <person name="Mane S.P."/>
            <person name="Evans C."/>
            <person name="Martino-Catt S."/>
            <person name="Bricker B."/>
            <person name="Yu G."/>
            <person name="Du L."/>
            <person name="Sobral B.W."/>
        </authorList>
    </citation>
    <scope>NUCLEOTIDE SEQUENCE [LARGE SCALE GENOMIC DNA]</scope>
    <source>
        <strain>S19</strain>
    </source>
</reference>
<protein>
    <recommendedName>
        <fullName evidence="1">UDP-N-acetylenolpyruvoylglucosamine reductase</fullName>
        <ecNumber evidence="1">1.3.1.98</ecNumber>
    </recommendedName>
    <alternativeName>
        <fullName evidence="1">UDP-N-acetylmuramate dehydrogenase</fullName>
    </alternativeName>
</protein>
<comment type="function">
    <text evidence="1">Cell wall formation.</text>
</comment>
<comment type="catalytic activity">
    <reaction evidence="1">
        <text>UDP-N-acetyl-alpha-D-muramate + NADP(+) = UDP-N-acetyl-3-O-(1-carboxyvinyl)-alpha-D-glucosamine + NADPH + H(+)</text>
        <dbReference type="Rhea" id="RHEA:12248"/>
        <dbReference type="ChEBI" id="CHEBI:15378"/>
        <dbReference type="ChEBI" id="CHEBI:57783"/>
        <dbReference type="ChEBI" id="CHEBI:58349"/>
        <dbReference type="ChEBI" id="CHEBI:68483"/>
        <dbReference type="ChEBI" id="CHEBI:70757"/>
        <dbReference type="EC" id="1.3.1.98"/>
    </reaction>
</comment>
<comment type="cofactor">
    <cofactor evidence="1">
        <name>FAD</name>
        <dbReference type="ChEBI" id="CHEBI:57692"/>
    </cofactor>
</comment>
<comment type="pathway">
    <text evidence="1">Cell wall biogenesis; peptidoglycan biosynthesis.</text>
</comment>
<comment type="subcellular location">
    <subcellularLocation>
        <location evidence="1">Cytoplasm</location>
    </subcellularLocation>
</comment>
<comment type="similarity">
    <text evidence="1">Belongs to the MurB family.</text>
</comment>
<proteinExistence type="inferred from homology"/>
<gene>
    <name evidence="1" type="primary">murB</name>
    <name type="ordered locus">BAbS19_I13540</name>
</gene>
<feature type="chain" id="PRO_1000191400" description="UDP-N-acetylenolpyruvoylglucosamine reductase">
    <location>
        <begin position="1"/>
        <end position="322"/>
    </location>
</feature>
<feature type="domain" description="FAD-binding PCMH-type" evidence="1">
    <location>
        <begin position="36"/>
        <end position="202"/>
    </location>
</feature>
<feature type="active site" evidence="1">
    <location>
        <position position="182"/>
    </location>
</feature>
<feature type="active site" description="Proton donor" evidence="1">
    <location>
        <position position="231"/>
    </location>
</feature>
<feature type="active site" evidence="1">
    <location>
        <position position="301"/>
    </location>
</feature>
<dbReference type="EC" id="1.3.1.98" evidence="1"/>
<dbReference type="EMBL" id="CP000887">
    <property type="protein sequence ID" value="ACD72849.1"/>
    <property type="molecule type" value="Genomic_DNA"/>
</dbReference>
<dbReference type="RefSeq" id="WP_002966892.1">
    <property type="nucleotide sequence ID" value="NC_010742.1"/>
</dbReference>
<dbReference type="SMR" id="B2S6Q2"/>
<dbReference type="GeneID" id="93016273"/>
<dbReference type="KEGG" id="bmc:BAbS19_I13540"/>
<dbReference type="HOGENOM" id="CLU_035304_1_0_5"/>
<dbReference type="UniPathway" id="UPA00219"/>
<dbReference type="Proteomes" id="UP000002565">
    <property type="component" value="Chromosome 1"/>
</dbReference>
<dbReference type="GO" id="GO:0005829">
    <property type="term" value="C:cytosol"/>
    <property type="evidence" value="ECO:0007669"/>
    <property type="project" value="TreeGrafter"/>
</dbReference>
<dbReference type="GO" id="GO:0071949">
    <property type="term" value="F:FAD binding"/>
    <property type="evidence" value="ECO:0007669"/>
    <property type="project" value="InterPro"/>
</dbReference>
<dbReference type="GO" id="GO:0008762">
    <property type="term" value="F:UDP-N-acetylmuramate dehydrogenase activity"/>
    <property type="evidence" value="ECO:0007669"/>
    <property type="project" value="UniProtKB-UniRule"/>
</dbReference>
<dbReference type="GO" id="GO:0051301">
    <property type="term" value="P:cell division"/>
    <property type="evidence" value="ECO:0007669"/>
    <property type="project" value="UniProtKB-KW"/>
</dbReference>
<dbReference type="GO" id="GO:0071555">
    <property type="term" value="P:cell wall organization"/>
    <property type="evidence" value="ECO:0007669"/>
    <property type="project" value="UniProtKB-KW"/>
</dbReference>
<dbReference type="GO" id="GO:0009252">
    <property type="term" value="P:peptidoglycan biosynthetic process"/>
    <property type="evidence" value="ECO:0007669"/>
    <property type="project" value="UniProtKB-UniRule"/>
</dbReference>
<dbReference type="GO" id="GO:0008360">
    <property type="term" value="P:regulation of cell shape"/>
    <property type="evidence" value="ECO:0007669"/>
    <property type="project" value="UniProtKB-KW"/>
</dbReference>
<dbReference type="Gene3D" id="3.30.465.10">
    <property type="match status" value="1"/>
</dbReference>
<dbReference type="Gene3D" id="3.90.78.10">
    <property type="entry name" value="UDP-N-acetylenolpyruvoylglucosamine reductase, C-terminal domain"/>
    <property type="match status" value="1"/>
</dbReference>
<dbReference type="Gene3D" id="3.30.43.10">
    <property type="entry name" value="Uridine Diphospho-n-acetylenolpyruvylglucosamine Reductase, domain 2"/>
    <property type="match status" value="1"/>
</dbReference>
<dbReference type="HAMAP" id="MF_00037">
    <property type="entry name" value="MurB"/>
    <property type="match status" value="1"/>
</dbReference>
<dbReference type="InterPro" id="IPR016166">
    <property type="entry name" value="FAD-bd_PCMH"/>
</dbReference>
<dbReference type="InterPro" id="IPR036318">
    <property type="entry name" value="FAD-bd_PCMH-like_sf"/>
</dbReference>
<dbReference type="InterPro" id="IPR016167">
    <property type="entry name" value="FAD-bd_PCMH_sub1"/>
</dbReference>
<dbReference type="InterPro" id="IPR016169">
    <property type="entry name" value="FAD-bd_PCMH_sub2"/>
</dbReference>
<dbReference type="InterPro" id="IPR003170">
    <property type="entry name" value="MurB"/>
</dbReference>
<dbReference type="InterPro" id="IPR011601">
    <property type="entry name" value="MurB_C"/>
</dbReference>
<dbReference type="InterPro" id="IPR036635">
    <property type="entry name" value="MurB_C_sf"/>
</dbReference>
<dbReference type="InterPro" id="IPR006094">
    <property type="entry name" value="Oxid_FAD_bind_N"/>
</dbReference>
<dbReference type="NCBIfam" id="TIGR00179">
    <property type="entry name" value="murB"/>
    <property type="match status" value="1"/>
</dbReference>
<dbReference type="NCBIfam" id="NF010480">
    <property type="entry name" value="PRK13905.1"/>
    <property type="match status" value="1"/>
</dbReference>
<dbReference type="PANTHER" id="PTHR21071">
    <property type="entry name" value="UDP-N-ACETYLENOLPYRUVOYLGLUCOSAMINE REDUCTASE"/>
    <property type="match status" value="1"/>
</dbReference>
<dbReference type="PANTHER" id="PTHR21071:SF4">
    <property type="entry name" value="UDP-N-ACETYLENOLPYRUVOYLGLUCOSAMINE REDUCTASE"/>
    <property type="match status" value="1"/>
</dbReference>
<dbReference type="Pfam" id="PF01565">
    <property type="entry name" value="FAD_binding_4"/>
    <property type="match status" value="1"/>
</dbReference>
<dbReference type="Pfam" id="PF02873">
    <property type="entry name" value="MurB_C"/>
    <property type="match status" value="1"/>
</dbReference>
<dbReference type="SUPFAM" id="SSF56176">
    <property type="entry name" value="FAD-binding/transporter-associated domain-like"/>
    <property type="match status" value="1"/>
</dbReference>
<dbReference type="SUPFAM" id="SSF56194">
    <property type="entry name" value="Uridine diphospho-N-Acetylenolpyruvylglucosamine reductase, MurB, C-terminal domain"/>
    <property type="match status" value="1"/>
</dbReference>
<dbReference type="PROSITE" id="PS51387">
    <property type="entry name" value="FAD_PCMH"/>
    <property type="match status" value="1"/>
</dbReference>